<protein>
    <recommendedName>
        <fullName evidence="1">Ribosomal RNA small subunit methyltransferase H</fullName>
        <ecNumber evidence="1">2.1.1.199</ecNumber>
    </recommendedName>
    <alternativeName>
        <fullName evidence="1">16S rRNA m(4)C1402 methyltransferase</fullName>
    </alternativeName>
    <alternativeName>
        <fullName evidence="1">rRNA (cytosine-N(4)-)-methyltransferase RsmH</fullName>
    </alternativeName>
</protein>
<evidence type="ECO:0000255" key="1">
    <source>
        <dbReference type="HAMAP-Rule" id="MF_01007"/>
    </source>
</evidence>
<accession>Q4JWA3</accession>
<dbReference type="EC" id="2.1.1.199" evidence="1"/>
<dbReference type="EMBL" id="CR931997">
    <property type="protein sequence ID" value="CAI36904.1"/>
    <property type="molecule type" value="Genomic_DNA"/>
</dbReference>
<dbReference type="RefSeq" id="WP_011273355.1">
    <property type="nucleotide sequence ID" value="NC_007164.1"/>
</dbReference>
<dbReference type="SMR" id="Q4JWA3"/>
<dbReference type="STRING" id="306537.jk0742"/>
<dbReference type="KEGG" id="cjk:jk0742"/>
<dbReference type="PATRIC" id="fig|306537.10.peg.750"/>
<dbReference type="eggNOG" id="COG0275">
    <property type="taxonomic scope" value="Bacteria"/>
</dbReference>
<dbReference type="HOGENOM" id="CLU_038422_0_0_11"/>
<dbReference type="OrthoDB" id="9806637at2"/>
<dbReference type="Proteomes" id="UP000000545">
    <property type="component" value="Chromosome"/>
</dbReference>
<dbReference type="GO" id="GO:0005737">
    <property type="term" value="C:cytoplasm"/>
    <property type="evidence" value="ECO:0007669"/>
    <property type="project" value="UniProtKB-SubCell"/>
</dbReference>
<dbReference type="GO" id="GO:0071424">
    <property type="term" value="F:rRNA (cytosine-N4-)-methyltransferase activity"/>
    <property type="evidence" value="ECO:0007669"/>
    <property type="project" value="UniProtKB-UniRule"/>
</dbReference>
<dbReference type="GO" id="GO:0070475">
    <property type="term" value="P:rRNA base methylation"/>
    <property type="evidence" value="ECO:0007669"/>
    <property type="project" value="UniProtKB-UniRule"/>
</dbReference>
<dbReference type="FunFam" id="1.10.150.170:FF:000001">
    <property type="entry name" value="Ribosomal RNA small subunit methyltransferase H"/>
    <property type="match status" value="1"/>
</dbReference>
<dbReference type="Gene3D" id="1.10.150.170">
    <property type="entry name" value="Putative methyltransferase TM0872, insert domain"/>
    <property type="match status" value="1"/>
</dbReference>
<dbReference type="Gene3D" id="3.40.50.150">
    <property type="entry name" value="Vaccinia Virus protein VP39"/>
    <property type="match status" value="1"/>
</dbReference>
<dbReference type="HAMAP" id="MF_01007">
    <property type="entry name" value="16SrRNA_methyltr_H"/>
    <property type="match status" value="1"/>
</dbReference>
<dbReference type="InterPro" id="IPR002903">
    <property type="entry name" value="RsmH"/>
</dbReference>
<dbReference type="InterPro" id="IPR023397">
    <property type="entry name" value="SAM-dep_MeTrfase_MraW_recog"/>
</dbReference>
<dbReference type="InterPro" id="IPR029063">
    <property type="entry name" value="SAM-dependent_MTases_sf"/>
</dbReference>
<dbReference type="NCBIfam" id="TIGR00006">
    <property type="entry name" value="16S rRNA (cytosine(1402)-N(4))-methyltransferase RsmH"/>
    <property type="match status" value="1"/>
</dbReference>
<dbReference type="PANTHER" id="PTHR11265:SF0">
    <property type="entry name" value="12S RRNA N4-METHYLCYTIDINE METHYLTRANSFERASE"/>
    <property type="match status" value="1"/>
</dbReference>
<dbReference type="PANTHER" id="PTHR11265">
    <property type="entry name" value="S-ADENOSYL-METHYLTRANSFERASE MRAW"/>
    <property type="match status" value="1"/>
</dbReference>
<dbReference type="Pfam" id="PF01795">
    <property type="entry name" value="Methyltransf_5"/>
    <property type="match status" value="1"/>
</dbReference>
<dbReference type="PIRSF" id="PIRSF004486">
    <property type="entry name" value="MraW"/>
    <property type="match status" value="1"/>
</dbReference>
<dbReference type="SUPFAM" id="SSF81799">
    <property type="entry name" value="Putative methyltransferase TM0872, insert domain"/>
    <property type="match status" value="1"/>
</dbReference>
<dbReference type="SUPFAM" id="SSF53335">
    <property type="entry name" value="S-adenosyl-L-methionine-dependent methyltransferases"/>
    <property type="match status" value="1"/>
</dbReference>
<reference key="1">
    <citation type="journal article" date="2005" name="J. Bacteriol.">
        <title>Complete genome sequence and analysis of the multiresistant nosocomial pathogen Corynebacterium jeikeium K411, a lipid-requiring bacterium of the human skin flora.</title>
        <authorList>
            <person name="Tauch A."/>
            <person name="Kaiser O."/>
            <person name="Hain T."/>
            <person name="Goesmann A."/>
            <person name="Weisshaar B."/>
            <person name="Albersmeier A."/>
            <person name="Bekel T."/>
            <person name="Bischoff N."/>
            <person name="Brune I."/>
            <person name="Chakraborty T."/>
            <person name="Kalinowski J."/>
            <person name="Meyer F."/>
            <person name="Rupp O."/>
            <person name="Schneiker S."/>
            <person name="Viehoever P."/>
            <person name="Puehler A."/>
        </authorList>
    </citation>
    <scope>NUCLEOTIDE SEQUENCE [LARGE SCALE GENOMIC DNA]</scope>
    <source>
        <strain>K411</strain>
    </source>
</reference>
<sequence length="342" mass="37454">MSEEHGHTPVMRDRMVELVGLGVNSENAPARPVIVDGTLGAGGHSEAFLDAFPHAIVVGLDRDPNALAEANARLARFGDRFVSYQTRFDGVTEALEDLMEQGKLPASVREHGISGFLFDLGVSSMQLDQPERGFAYAVDAPLDMRMDPSSPLTAAEILNTYSHGEIARILKTYGDERFAGKIASAVVREREKQPFENSARLVELLYATIPAASRRTGGHPAKRTFQALRVEVNAELESLENLIPEISRWLHVGAVGVFMSYQSLEDKIVKKALVQLSTSKTPPGLPMELPGMEAEFELRTRGAEKASEAEIEQNSRAAPVRVRAYSRVSDRGKTIFPLDTPS</sequence>
<name>RSMH_CORJK</name>
<organism>
    <name type="scientific">Corynebacterium jeikeium (strain K411)</name>
    <dbReference type="NCBI Taxonomy" id="306537"/>
    <lineage>
        <taxon>Bacteria</taxon>
        <taxon>Bacillati</taxon>
        <taxon>Actinomycetota</taxon>
        <taxon>Actinomycetes</taxon>
        <taxon>Mycobacteriales</taxon>
        <taxon>Corynebacteriaceae</taxon>
        <taxon>Corynebacterium</taxon>
    </lineage>
</organism>
<keyword id="KW-0963">Cytoplasm</keyword>
<keyword id="KW-0489">Methyltransferase</keyword>
<keyword id="KW-1185">Reference proteome</keyword>
<keyword id="KW-0698">rRNA processing</keyword>
<keyword id="KW-0949">S-adenosyl-L-methionine</keyword>
<keyword id="KW-0808">Transferase</keyword>
<feature type="chain" id="PRO_0000223538" description="Ribosomal RNA small subunit methyltransferase H">
    <location>
        <begin position="1"/>
        <end position="342"/>
    </location>
</feature>
<feature type="binding site" evidence="1">
    <location>
        <begin position="42"/>
        <end position="44"/>
    </location>
    <ligand>
        <name>S-adenosyl-L-methionine</name>
        <dbReference type="ChEBI" id="CHEBI:59789"/>
    </ligand>
</feature>
<feature type="binding site" evidence="1">
    <location>
        <position position="61"/>
    </location>
    <ligand>
        <name>S-adenosyl-L-methionine</name>
        <dbReference type="ChEBI" id="CHEBI:59789"/>
    </ligand>
</feature>
<feature type="binding site" evidence="1">
    <location>
        <position position="88"/>
    </location>
    <ligand>
        <name>S-adenosyl-L-methionine</name>
        <dbReference type="ChEBI" id="CHEBI:59789"/>
    </ligand>
</feature>
<feature type="binding site" evidence="1">
    <location>
        <position position="119"/>
    </location>
    <ligand>
        <name>S-adenosyl-L-methionine</name>
        <dbReference type="ChEBI" id="CHEBI:59789"/>
    </ligand>
</feature>
<feature type="binding site" evidence="1">
    <location>
        <position position="126"/>
    </location>
    <ligand>
        <name>S-adenosyl-L-methionine</name>
        <dbReference type="ChEBI" id="CHEBI:59789"/>
    </ligand>
</feature>
<gene>
    <name evidence="1" type="primary">rsmH</name>
    <name type="synonym">mraW</name>
    <name type="ordered locus">jk0742</name>
</gene>
<comment type="function">
    <text evidence="1">Specifically methylates the N4 position of cytidine in position 1402 (C1402) of 16S rRNA.</text>
</comment>
<comment type="catalytic activity">
    <reaction evidence="1">
        <text>cytidine(1402) in 16S rRNA + S-adenosyl-L-methionine = N(4)-methylcytidine(1402) in 16S rRNA + S-adenosyl-L-homocysteine + H(+)</text>
        <dbReference type="Rhea" id="RHEA:42928"/>
        <dbReference type="Rhea" id="RHEA-COMP:10286"/>
        <dbReference type="Rhea" id="RHEA-COMP:10287"/>
        <dbReference type="ChEBI" id="CHEBI:15378"/>
        <dbReference type="ChEBI" id="CHEBI:57856"/>
        <dbReference type="ChEBI" id="CHEBI:59789"/>
        <dbReference type="ChEBI" id="CHEBI:74506"/>
        <dbReference type="ChEBI" id="CHEBI:82748"/>
        <dbReference type="EC" id="2.1.1.199"/>
    </reaction>
</comment>
<comment type="subcellular location">
    <subcellularLocation>
        <location evidence="1">Cytoplasm</location>
    </subcellularLocation>
</comment>
<comment type="similarity">
    <text evidence="1">Belongs to the methyltransferase superfamily. RsmH family.</text>
</comment>
<proteinExistence type="inferred from homology"/>